<dbReference type="EMBL" id="CP000830">
    <property type="protein sequence ID" value="ABV91896.1"/>
    <property type="molecule type" value="Genomic_DNA"/>
</dbReference>
<dbReference type="RefSeq" id="WP_012176829.1">
    <property type="nucleotide sequence ID" value="NC_009952.1"/>
</dbReference>
<dbReference type="SMR" id="A8LKQ3"/>
<dbReference type="STRING" id="398580.Dshi_0147"/>
<dbReference type="KEGG" id="dsh:Dshi_0147"/>
<dbReference type="eggNOG" id="COG0691">
    <property type="taxonomic scope" value="Bacteria"/>
</dbReference>
<dbReference type="HOGENOM" id="CLU_108953_0_1_5"/>
<dbReference type="OrthoDB" id="9805462at2"/>
<dbReference type="Proteomes" id="UP000006833">
    <property type="component" value="Chromosome"/>
</dbReference>
<dbReference type="GO" id="GO:0005829">
    <property type="term" value="C:cytosol"/>
    <property type="evidence" value="ECO:0007669"/>
    <property type="project" value="TreeGrafter"/>
</dbReference>
<dbReference type="GO" id="GO:0003723">
    <property type="term" value="F:RNA binding"/>
    <property type="evidence" value="ECO:0007669"/>
    <property type="project" value="UniProtKB-UniRule"/>
</dbReference>
<dbReference type="GO" id="GO:0070929">
    <property type="term" value="P:trans-translation"/>
    <property type="evidence" value="ECO:0007669"/>
    <property type="project" value="UniProtKB-UniRule"/>
</dbReference>
<dbReference type="Gene3D" id="2.40.280.10">
    <property type="match status" value="1"/>
</dbReference>
<dbReference type="HAMAP" id="MF_00023">
    <property type="entry name" value="SmpB"/>
    <property type="match status" value="1"/>
</dbReference>
<dbReference type="InterPro" id="IPR023620">
    <property type="entry name" value="SmpB"/>
</dbReference>
<dbReference type="InterPro" id="IPR000037">
    <property type="entry name" value="SsrA-bd_prot"/>
</dbReference>
<dbReference type="NCBIfam" id="NF003843">
    <property type="entry name" value="PRK05422.1"/>
    <property type="match status" value="1"/>
</dbReference>
<dbReference type="NCBIfam" id="TIGR00086">
    <property type="entry name" value="smpB"/>
    <property type="match status" value="1"/>
</dbReference>
<dbReference type="PANTHER" id="PTHR30308:SF2">
    <property type="entry name" value="SSRA-BINDING PROTEIN"/>
    <property type="match status" value="1"/>
</dbReference>
<dbReference type="PANTHER" id="PTHR30308">
    <property type="entry name" value="TMRNA-BINDING COMPONENT OF TRANS-TRANSLATION TAGGING COMPLEX"/>
    <property type="match status" value="1"/>
</dbReference>
<dbReference type="Pfam" id="PF01668">
    <property type="entry name" value="SmpB"/>
    <property type="match status" value="1"/>
</dbReference>
<dbReference type="SUPFAM" id="SSF74982">
    <property type="entry name" value="Small protein B (SmpB)"/>
    <property type="match status" value="1"/>
</dbReference>
<keyword id="KW-0963">Cytoplasm</keyword>
<keyword id="KW-1185">Reference proteome</keyword>
<keyword id="KW-0694">RNA-binding</keyword>
<accession>A8LKQ3</accession>
<protein>
    <recommendedName>
        <fullName evidence="1">SsrA-binding protein</fullName>
    </recommendedName>
    <alternativeName>
        <fullName evidence="1">Small protein B</fullName>
    </alternativeName>
</protein>
<evidence type="ECO:0000255" key="1">
    <source>
        <dbReference type="HAMAP-Rule" id="MF_00023"/>
    </source>
</evidence>
<proteinExistence type="inferred from homology"/>
<comment type="function">
    <text evidence="1">Required for rescue of stalled ribosomes mediated by trans-translation. Binds to transfer-messenger RNA (tmRNA), required for stable association of tmRNA with ribosomes. tmRNA and SmpB together mimic tRNA shape, replacing the anticodon stem-loop with SmpB. tmRNA is encoded by the ssrA gene; the 2 termini fold to resemble tRNA(Ala) and it encodes a 'tag peptide', a short internal open reading frame. During trans-translation Ala-aminoacylated tmRNA acts like a tRNA, entering the A-site of stalled ribosomes, displacing the stalled mRNA. The ribosome then switches to translate the ORF on the tmRNA; the nascent peptide is terminated with the 'tag peptide' encoded by the tmRNA and targeted for degradation. The ribosome is freed to recommence translation, which seems to be the essential function of trans-translation.</text>
</comment>
<comment type="subcellular location">
    <subcellularLocation>
        <location evidence="1">Cytoplasm</location>
    </subcellularLocation>
    <text evidence="1">The tmRNA-SmpB complex associates with stalled 70S ribosomes.</text>
</comment>
<comment type="similarity">
    <text evidence="1">Belongs to the SmpB family.</text>
</comment>
<gene>
    <name evidence="1" type="primary">smpB</name>
    <name type="ordered locus">Dshi_0147</name>
</gene>
<name>SSRP_DINSH</name>
<feature type="chain" id="PRO_0000331044" description="SsrA-binding protein">
    <location>
        <begin position="1"/>
        <end position="160"/>
    </location>
</feature>
<reference key="1">
    <citation type="journal article" date="2010" name="ISME J.">
        <title>The complete genome sequence of the algal symbiont Dinoroseobacter shibae: a hitchhiker's guide to life in the sea.</title>
        <authorList>
            <person name="Wagner-Dobler I."/>
            <person name="Ballhausen B."/>
            <person name="Berger M."/>
            <person name="Brinkhoff T."/>
            <person name="Buchholz I."/>
            <person name="Bunk B."/>
            <person name="Cypionka H."/>
            <person name="Daniel R."/>
            <person name="Drepper T."/>
            <person name="Gerdts G."/>
            <person name="Hahnke S."/>
            <person name="Han C."/>
            <person name="Jahn D."/>
            <person name="Kalhoefer D."/>
            <person name="Kiss H."/>
            <person name="Klenk H.P."/>
            <person name="Kyrpides N."/>
            <person name="Liebl W."/>
            <person name="Liesegang H."/>
            <person name="Meincke L."/>
            <person name="Pati A."/>
            <person name="Petersen J."/>
            <person name="Piekarski T."/>
            <person name="Pommerenke C."/>
            <person name="Pradella S."/>
            <person name="Pukall R."/>
            <person name="Rabus R."/>
            <person name="Stackebrandt E."/>
            <person name="Thole S."/>
            <person name="Thompson L."/>
            <person name="Tielen P."/>
            <person name="Tomasch J."/>
            <person name="von Jan M."/>
            <person name="Wanphrut N."/>
            <person name="Wichels A."/>
            <person name="Zech H."/>
            <person name="Simon M."/>
        </authorList>
    </citation>
    <scope>NUCLEOTIDE SEQUENCE [LARGE SCALE GENOMIC DNA]</scope>
    <source>
        <strain>DSM 16493 / NCIMB 14021 / DFL 12</strain>
    </source>
</reference>
<organism>
    <name type="scientific">Dinoroseobacter shibae (strain DSM 16493 / NCIMB 14021 / DFL 12)</name>
    <dbReference type="NCBI Taxonomy" id="398580"/>
    <lineage>
        <taxon>Bacteria</taxon>
        <taxon>Pseudomonadati</taxon>
        <taxon>Pseudomonadota</taxon>
        <taxon>Alphaproteobacteria</taxon>
        <taxon>Rhodobacterales</taxon>
        <taxon>Roseobacteraceae</taxon>
        <taxon>Dinoroseobacter</taxon>
    </lineage>
</organism>
<sequence>MAKPKTPEEKNYKVIAENRRARREYAIEEDLEVGIVLEGSEVKSLREGGSNIAESYATVDDGELWLVNSYIAPYAQAKTWKHEERRRRKLLVSRRELSRLWNATQRQGMTLVPLVMYFNHRGLVKLKIGVAKGKKLADKRQTDAKRDWNRQKQRLLKQNL</sequence>